<reference key="1">
    <citation type="journal article" date="2004" name="Nat. Genet.">
        <title>Comparison of genome degradation in Paratyphi A and Typhi, human-restricted serovars of Salmonella enterica that cause typhoid.</title>
        <authorList>
            <person name="McClelland M."/>
            <person name="Sanderson K.E."/>
            <person name="Clifton S.W."/>
            <person name="Latreille P."/>
            <person name="Porwollik S."/>
            <person name="Sabo A."/>
            <person name="Meyer R."/>
            <person name="Bieri T."/>
            <person name="Ozersky P."/>
            <person name="McLellan M."/>
            <person name="Harkins C.R."/>
            <person name="Wang C."/>
            <person name="Nguyen C."/>
            <person name="Berghoff A."/>
            <person name="Elliott G."/>
            <person name="Kohlberg S."/>
            <person name="Strong C."/>
            <person name="Du F."/>
            <person name="Carter J."/>
            <person name="Kremizki C."/>
            <person name="Layman D."/>
            <person name="Leonard S."/>
            <person name="Sun H."/>
            <person name="Fulton L."/>
            <person name="Nash W."/>
            <person name="Miner T."/>
            <person name="Minx P."/>
            <person name="Delehaunty K."/>
            <person name="Fronick C."/>
            <person name="Magrini V."/>
            <person name="Nhan M."/>
            <person name="Warren W."/>
            <person name="Florea L."/>
            <person name="Spieth J."/>
            <person name="Wilson R.K."/>
        </authorList>
    </citation>
    <scope>NUCLEOTIDE SEQUENCE [LARGE SCALE GENOMIC DNA]</scope>
    <source>
        <strain>ATCC 9150 / SARB42</strain>
    </source>
</reference>
<dbReference type="EC" id="2.4.2.17" evidence="1"/>
<dbReference type="EMBL" id="CP000026">
    <property type="protein sequence ID" value="AAV76793.1"/>
    <property type="molecule type" value="Genomic_DNA"/>
</dbReference>
<dbReference type="RefSeq" id="WP_000886604.1">
    <property type="nucleotide sequence ID" value="NC_006511.1"/>
</dbReference>
<dbReference type="SMR" id="Q5PDP2"/>
<dbReference type="KEGG" id="spt:SPA0800"/>
<dbReference type="HOGENOM" id="CLU_038115_1_0_6"/>
<dbReference type="UniPathway" id="UPA00031">
    <property type="reaction ID" value="UER00006"/>
</dbReference>
<dbReference type="Proteomes" id="UP000008185">
    <property type="component" value="Chromosome"/>
</dbReference>
<dbReference type="GO" id="GO:0005737">
    <property type="term" value="C:cytoplasm"/>
    <property type="evidence" value="ECO:0007669"/>
    <property type="project" value="UniProtKB-SubCell"/>
</dbReference>
<dbReference type="GO" id="GO:0005524">
    <property type="term" value="F:ATP binding"/>
    <property type="evidence" value="ECO:0007669"/>
    <property type="project" value="UniProtKB-KW"/>
</dbReference>
<dbReference type="GO" id="GO:0003879">
    <property type="term" value="F:ATP phosphoribosyltransferase activity"/>
    <property type="evidence" value="ECO:0007669"/>
    <property type="project" value="UniProtKB-UniRule"/>
</dbReference>
<dbReference type="GO" id="GO:0000287">
    <property type="term" value="F:magnesium ion binding"/>
    <property type="evidence" value="ECO:0007669"/>
    <property type="project" value="UniProtKB-UniRule"/>
</dbReference>
<dbReference type="GO" id="GO:0000105">
    <property type="term" value="P:L-histidine biosynthetic process"/>
    <property type="evidence" value="ECO:0007669"/>
    <property type="project" value="UniProtKB-UniRule"/>
</dbReference>
<dbReference type="CDD" id="cd13592">
    <property type="entry name" value="PBP2_HisGL2"/>
    <property type="match status" value="1"/>
</dbReference>
<dbReference type="FunFam" id="3.30.70.120:FF:000002">
    <property type="entry name" value="ATP phosphoribosyltransferase"/>
    <property type="match status" value="1"/>
</dbReference>
<dbReference type="FunFam" id="3.40.190.10:FF:000008">
    <property type="entry name" value="ATP phosphoribosyltransferase"/>
    <property type="match status" value="1"/>
</dbReference>
<dbReference type="Gene3D" id="3.30.70.120">
    <property type="match status" value="1"/>
</dbReference>
<dbReference type="Gene3D" id="3.40.190.10">
    <property type="entry name" value="Periplasmic binding protein-like II"/>
    <property type="match status" value="2"/>
</dbReference>
<dbReference type="HAMAP" id="MF_00079">
    <property type="entry name" value="HisG_Long"/>
    <property type="match status" value="1"/>
</dbReference>
<dbReference type="InterPro" id="IPR020621">
    <property type="entry name" value="ATP-PRT_HisG_long"/>
</dbReference>
<dbReference type="InterPro" id="IPR013820">
    <property type="entry name" value="ATP_PRibTrfase_cat"/>
</dbReference>
<dbReference type="InterPro" id="IPR018198">
    <property type="entry name" value="ATP_PRibTrfase_CS"/>
</dbReference>
<dbReference type="InterPro" id="IPR001348">
    <property type="entry name" value="ATP_PRibTrfase_HisG"/>
</dbReference>
<dbReference type="InterPro" id="IPR013115">
    <property type="entry name" value="HisG_C"/>
</dbReference>
<dbReference type="InterPro" id="IPR011322">
    <property type="entry name" value="N-reg_PII-like_a/b"/>
</dbReference>
<dbReference type="InterPro" id="IPR015867">
    <property type="entry name" value="N-reg_PII/ATP_PRibTrfase_C"/>
</dbReference>
<dbReference type="NCBIfam" id="TIGR00070">
    <property type="entry name" value="hisG"/>
    <property type="match status" value="1"/>
</dbReference>
<dbReference type="NCBIfam" id="TIGR03455">
    <property type="entry name" value="HisG_C-term"/>
    <property type="match status" value="1"/>
</dbReference>
<dbReference type="PANTHER" id="PTHR21403:SF8">
    <property type="entry name" value="ATP PHOSPHORIBOSYLTRANSFERASE"/>
    <property type="match status" value="1"/>
</dbReference>
<dbReference type="PANTHER" id="PTHR21403">
    <property type="entry name" value="ATP PHOSPHORIBOSYLTRANSFERASE ATP-PRTASE"/>
    <property type="match status" value="1"/>
</dbReference>
<dbReference type="Pfam" id="PF01634">
    <property type="entry name" value="HisG"/>
    <property type="match status" value="1"/>
</dbReference>
<dbReference type="Pfam" id="PF08029">
    <property type="entry name" value="HisG_C"/>
    <property type="match status" value="1"/>
</dbReference>
<dbReference type="SUPFAM" id="SSF54913">
    <property type="entry name" value="GlnB-like"/>
    <property type="match status" value="1"/>
</dbReference>
<dbReference type="SUPFAM" id="SSF53850">
    <property type="entry name" value="Periplasmic binding protein-like II"/>
    <property type="match status" value="1"/>
</dbReference>
<dbReference type="PROSITE" id="PS01316">
    <property type="entry name" value="ATP_P_PHORIBOSYLTR"/>
    <property type="match status" value="1"/>
</dbReference>
<evidence type="ECO:0000255" key="1">
    <source>
        <dbReference type="HAMAP-Rule" id="MF_00079"/>
    </source>
</evidence>
<protein>
    <recommendedName>
        <fullName evidence="1">ATP phosphoribosyltransferase</fullName>
        <shortName evidence="1">ATP-PRT</shortName>
        <shortName evidence="1">ATP-PRTase</shortName>
        <ecNumber evidence="1">2.4.2.17</ecNumber>
    </recommendedName>
</protein>
<gene>
    <name evidence="1" type="primary">hisG</name>
    <name type="ordered locus">SPA0800</name>
</gene>
<sequence length="299" mass="33211">MLDNTRLRIAIQKSGRLSDDSRELLARCGIKINLHTQRLIAMAENMPIDILRVRDDDIPGLVMDGVVDLGIIGENVLEEELLNRRAQGEDPRYLTLRRLDFGGCRLSLATPVDEAWDGPAALDGKRIATSYPHLLKRYLDQKGVSFKSCLLNGSVEVAPRAGLADAICDLVSTGATLEANGLREVEVIYRSKACLIQRDGEMAQSKQQLIDKLLTRIQGVIQARESKYIMMHAPSERLEEVIALLPGAERPTILPLAGEQQRVAMHMVSSETLFWETMEKLKALGASSILVLPIEKMME</sequence>
<proteinExistence type="inferred from homology"/>
<organism>
    <name type="scientific">Salmonella paratyphi A (strain ATCC 9150 / SARB42)</name>
    <dbReference type="NCBI Taxonomy" id="295319"/>
    <lineage>
        <taxon>Bacteria</taxon>
        <taxon>Pseudomonadati</taxon>
        <taxon>Pseudomonadota</taxon>
        <taxon>Gammaproteobacteria</taxon>
        <taxon>Enterobacterales</taxon>
        <taxon>Enterobacteriaceae</taxon>
        <taxon>Salmonella</taxon>
    </lineage>
</organism>
<accession>Q5PDP2</accession>
<name>HIS1_SALPA</name>
<keyword id="KW-0028">Amino-acid biosynthesis</keyword>
<keyword id="KW-0067">ATP-binding</keyword>
<keyword id="KW-0963">Cytoplasm</keyword>
<keyword id="KW-0328">Glycosyltransferase</keyword>
<keyword id="KW-0368">Histidine biosynthesis</keyword>
<keyword id="KW-0460">Magnesium</keyword>
<keyword id="KW-0479">Metal-binding</keyword>
<keyword id="KW-0547">Nucleotide-binding</keyword>
<keyword id="KW-0808">Transferase</keyword>
<comment type="function">
    <text evidence="1">Catalyzes the condensation of ATP and 5-phosphoribose 1-diphosphate to form N'-(5'-phosphoribosyl)-ATP (PR-ATP). Has a crucial role in the pathway because the rate of histidine biosynthesis seems to be controlled primarily by regulation of HisG enzymatic activity.</text>
</comment>
<comment type="catalytic activity">
    <reaction evidence="1">
        <text>1-(5-phospho-beta-D-ribosyl)-ATP + diphosphate = 5-phospho-alpha-D-ribose 1-diphosphate + ATP</text>
        <dbReference type="Rhea" id="RHEA:18473"/>
        <dbReference type="ChEBI" id="CHEBI:30616"/>
        <dbReference type="ChEBI" id="CHEBI:33019"/>
        <dbReference type="ChEBI" id="CHEBI:58017"/>
        <dbReference type="ChEBI" id="CHEBI:73183"/>
        <dbReference type="EC" id="2.4.2.17"/>
    </reaction>
</comment>
<comment type="cofactor">
    <cofactor evidence="1">
        <name>Mg(2+)</name>
        <dbReference type="ChEBI" id="CHEBI:18420"/>
    </cofactor>
</comment>
<comment type="activity regulation">
    <text evidence="1">Feedback inhibited by histidine.</text>
</comment>
<comment type="pathway">
    <text evidence="1">Amino-acid biosynthesis; L-histidine biosynthesis; L-histidine from 5-phospho-alpha-D-ribose 1-diphosphate: step 1/9.</text>
</comment>
<comment type="subunit">
    <text evidence="1">Equilibrium between an active dimeric form, an inactive hexameric form and higher aggregates. Interconversion between the various forms is largely reversible and is influenced by the natural substrates and inhibitors of the enzyme.</text>
</comment>
<comment type="subcellular location">
    <subcellularLocation>
        <location evidence="1">Cytoplasm</location>
    </subcellularLocation>
</comment>
<comment type="similarity">
    <text evidence="1">Belongs to the ATP phosphoribosyltransferase family. Long subfamily.</text>
</comment>
<feature type="chain" id="PRO_1000004497" description="ATP phosphoribosyltransferase">
    <location>
        <begin position="1"/>
        <end position="299"/>
    </location>
</feature>